<evidence type="ECO:0000250" key="1"/>
<evidence type="ECO:0000255" key="2">
    <source>
        <dbReference type="PROSITE-ProRule" id="PRU00126"/>
    </source>
</evidence>
<evidence type="ECO:0000256" key="3">
    <source>
        <dbReference type="SAM" id="MobiDB-lite"/>
    </source>
</evidence>
<evidence type="ECO:0000305" key="4"/>
<comment type="function">
    <text evidence="1">Transcription factor that regulates pseudohyphal differentiation, invasive growth, floculation, adhesion and starch metabolism in response to nutrient availability.</text>
</comment>
<comment type="subcellular location">
    <subcellularLocation>
        <location evidence="1">Cytoplasm</location>
    </subcellularLocation>
    <subcellularLocation>
        <location evidence="1">Nucleus</location>
    </subcellularLocation>
</comment>
<comment type="similarity">
    <text evidence="4">Belongs to the MSS11 family.</text>
</comment>
<feature type="chain" id="PRO_0000333387" description="Transcription activator MSS11">
    <location>
        <begin position="1"/>
        <end position="810"/>
    </location>
</feature>
<feature type="domain" description="LisH" evidence="2">
    <location>
        <begin position="59"/>
        <end position="91"/>
    </location>
</feature>
<feature type="region of interest" description="Disordered" evidence="3">
    <location>
        <begin position="1"/>
        <end position="25"/>
    </location>
</feature>
<feature type="region of interest" description="Disordered" evidence="3">
    <location>
        <begin position="173"/>
        <end position="249"/>
    </location>
</feature>
<feature type="region of interest" description="Disordered" evidence="3">
    <location>
        <begin position="263"/>
        <end position="296"/>
    </location>
</feature>
<feature type="region of interest" description="Disordered" evidence="3">
    <location>
        <begin position="321"/>
        <end position="347"/>
    </location>
</feature>
<feature type="region of interest" description="Disordered" evidence="3">
    <location>
        <begin position="364"/>
        <end position="428"/>
    </location>
</feature>
<feature type="region of interest" description="Disordered" evidence="3">
    <location>
        <begin position="441"/>
        <end position="489"/>
    </location>
</feature>
<feature type="region of interest" description="Disordered" evidence="3">
    <location>
        <begin position="560"/>
        <end position="771"/>
    </location>
</feature>
<feature type="compositionally biased region" description="Basic and acidic residues" evidence="3">
    <location>
        <begin position="1"/>
        <end position="13"/>
    </location>
</feature>
<feature type="compositionally biased region" description="Polar residues" evidence="3">
    <location>
        <begin position="173"/>
        <end position="218"/>
    </location>
</feature>
<feature type="compositionally biased region" description="Low complexity" evidence="3">
    <location>
        <begin position="219"/>
        <end position="248"/>
    </location>
</feature>
<feature type="compositionally biased region" description="Low complexity" evidence="3">
    <location>
        <begin position="321"/>
        <end position="338"/>
    </location>
</feature>
<feature type="compositionally biased region" description="Low complexity" evidence="3">
    <location>
        <begin position="441"/>
        <end position="484"/>
    </location>
</feature>
<feature type="compositionally biased region" description="Polar residues" evidence="3">
    <location>
        <begin position="564"/>
        <end position="581"/>
    </location>
</feature>
<feature type="compositionally biased region" description="Basic and acidic residues" evidence="3">
    <location>
        <begin position="584"/>
        <end position="598"/>
    </location>
</feature>
<feature type="compositionally biased region" description="Polar residues" evidence="3">
    <location>
        <begin position="599"/>
        <end position="640"/>
    </location>
</feature>
<feature type="compositionally biased region" description="Basic residues" evidence="3">
    <location>
        <begin position="651"/>
        <end position="660"/>
    </location>
</feature>
<feature type="compositionally biased region" description="Polar residues" evidence="3">
    <location>
        <begin position="666"/>
        <end position="677"/>
    </location>
</feature>
<feature type="compositionally biased region" description="Low complexity" evidence="3">
    <location>
        <begin position="678"/>
        <end position="698"/>
    </location>
</feature>
<feature type="compositionally biased region" description="Polar residues" evidence="3">
    <location>
        <begin position="704"/>
        <end position="720"/>
    </location>
</feature>
<feature type="compositionally biased region" description="Low complexity" evidence="3">
    <location>
        <begin position="729"/>
        <end position="763"/>
    </location>
</feature>
<proteinExistence type="inferred from homology"/>
<protein>
    <recommendedName>
        <fullName>Transcription activator MSS11</fullName>
    </recommendedName>
</protein>
<organism>
    <name type="scientific">Vanderwaltozyma polyspora (strain ATCC 22028 / DSM 70294 / BCRC 21397 / CBS 2163 / NBRC 10782 / NRRL Y-8283 / UCD 57-17)</name>
    <name type="common">Kluyveromyces polysporus</name>
    <dbReference type="NCBI Taxonomy" id="436907"/>
    <lineage>
        <taxon>Eukaryota</taxon>
        <taxon>Fungi</taxon>
        <taxon>Dikarya</taxon>
        <taxon>Ascomycota</taxon>
        <taxon>Saccharomycotina</taxon>
        <taxon>Saccharomycetes</taxon>
        <taxon>Saccharomycetales</taxon>
        <taxon>Saccharomycetaceae</taxon>
        <taxon>Vanderwaltozyma</taxon>
    </lineage>
</organism>
<name>MSS11_VANPO</name>
<keyword id="KW-0010">Activator</keyword>
<keyword id="KW-0963">Cytoplasm</keyword>
<keyword id="KW-0539">Nucleus</keyword>
<keyword id="KW-1185">Reference proteome</keyword>
<keyword id="KW-0804">Transcription</keyword>
<keyword id="KW-0805">Transcription regulation</keyword>
<reference key="1">
    <citation type="journal article" date="2007" name="Proc. Natl. Acad. Sci. U.S.A.">
        <title>Independent sorting-out of thousands of duplicated gene pairs in two yeast species descended from a whole-genome duplication.</title>
        <authorList>
            <person name="Scannell D.R."/>
            <person name="Frank A.C."/>
            <person name="Conant G.C."/>
            <person name="Byrne K.P."/>
            <person name="Woolfit M."/>
            <person name="Wolfe K.H."/>
        </authorList>
    </citation>
    <scope>NUCLEOTIDE SEQUENCE [LARGE SCALE GENOMIC DNA]</scope>
    <source>
        <strain>ATCC 22028 / DSM 70294 / BCRC 21397 / CBS 2163 / NBRC 10782 / NRRL Y-8283 / UCD 57-17</strain>
    </source>
</reference>
<gene>
    <name type="primary">MSS11</name>
    <name type="ORF">Kpol_1043p18</name>
</gene>
<dbReference type="EMBL" id="DS480397">
    <property type="protein sequence ID" value="EDO17828.1"/>
    <property type="molecule type" value="Genomic_DNA"/>
</dbReference>
<dbReference type="RefSeq" id="XP_001645686.1">
    <property type="nucleotide sequence ID" value="XM_001645636.1"/>
</dbReference>
<dbReference type="SMR" id="A7TIN6"/>
<dbReference type="STRING" id="436907.A7TIN6"/>
<dbReference type="GeneID" id="5546082"/>
<dbReference type="KEGG" id="vpo:Kpol_1043p18"/>
<dbReference type="eggNOG" id="ENOG502S549">
    <property type="taxonomic scope" value="Eukaryota"/>
</dbReference>
<dbReference type="HOGENOM" id="CLU_348237_0_0_1"/>
<dbReference type="InParanoid" id="A7TIN6"/>
<dbReference type="OMA" id="LLEWWEI"/>
<dbReference type="OrthoDB" id="4036671at2759"/>
<dbReference type="Proteomes" id="UP000000267">
    <property type="component" value="Unassembled WGS sequence"/>
</dbReference>
<dbReference type="GO" id="GO:0005737">
    <property type="term" value="C:cytoplasm"/>
    <property type="evidence" value="ECO:0007669"/>
    <property type="project" value="UniProtKB-SubCell"/>
</dbReference>
<dbReference type="GO" id="GO:0005634">
    <property type="term" value="C:nucleus"/>
    <property type="evidence" value="ECO:0007669"/>
    <property type="project" value="UniProtKB-SubCell"/>
</dbReference>
<dbReference type="GO" id="GO:0009889">
    <property type="term" value="P:regulation of biosynthetic process"/>
    <property type="evidence" value="ECO:0007669"/>
    <property type="project" value="UniProtKB-ARBA"/>
</dbReference>
<dbReference type="InterPro" id="IPR006594">
    <property type="entry name" value="LisH"/>
</dbReference>
<dbReference type="Pfam" id="PF08513">
    <property type="entry name" value="LisH"/>
    <property type="match status" value="1"/>
</dbReference>
<dbReference type="SMART" id="SM00667">
    <property type="entry name" value="LisH"/>
    <property type="match status" value="1"/>
</dbReference>
<dbReference type="PROSITE" id="PS50896">
    <property type="entry name" value="LISH"/>
    <property type="match status" value="1"/>
</dbReference>
<accession>A7TIN6</accession>
<sequence length="810" mass="90815">MKRNRDTKMDHKSGKMNANDRNQQNNIKQEFKSDLNEAANAQPKYNFNIMVSDAMAKTSKQLLYAHIYNYLLHNKHLETAKQFLKEADVPLLTGNNNDDVAVKNPTAATLSQNDLNPRELLPTKMLMNANDTFLLEWWEYFSSVYDFVDTSDLSALQNNDFLQDRIFPILPTSNKVPTQRYSRQQSDQVQMNQNSTGNSSRSGMGTPIANPSNQNYQHSSNPNSGTPTSTANNNTNNNNNNNSNNNNSKQFAQQTLNSQLQNGVVYPSNQNGQQHARRPQSVSSDISNTMSMDEQQQQMNLLKQVNSQNPQLMNNMLFQNVQQQSSSSPNTPVSANNVDGNGQFPISKMNWNRIQRERMRIMRQQQQIRQQQMQQQRPQPNQQQIQQQQQRSQLPQQQAQQRIQQAKQQVSQQQRPHPTQQQVHQMQQMQKQLQQQLQQQSVMQGQQQGPMQLQQGQTQSQGQGQAQDAQQQGQPLSQQQMKQLRNGGNVDSNIQQQYMSMMMQMMMLSKNNQQIPQQMQQQMMQQMQQLQQQQQQALQQNTGKPQLSHQFVVPVNNQVVTTPGGSSTSARTKSNARSTNTNKKKMETVSKKNNKRSDINSPATIVPISTPTSSDGNIISSTQGTNFPIVNLSQAPTPTSKAEGDGEAGQNKKRRRKKPKTPNTNVSASTPTAGNTANSTPVTTSGVNSSVVGSATTSNDKRTPSNTVANNDGSMQTNVNELDIGLGMNTNSNNNNNNNNNNNNNNNNNNNNNNNNNNNPNSNSRDKINNNDLNMNLDMMSFGNSASSMGLNDGFQLFDMDGFPNDIMGS</sequence>